<feature type="chain" id="PRO_0000221236" description="Desiccation protectant protein Lea14 homolog">
    <location>
        <begin position="1"/>
        <end position="152"/>
    </location>
</feature>
<sequence>MSQLLDKAKNYVAEKVTNMPKPEASVTDVDFKRVSRDSVEYLAKVSVSNPYSTPIPICEIKYSLKSAGKEIASGTIPDPGSLKASDTTMLDVPVKVPHSILLSLAKDIGADWDIDYQLDLGLVIDLPVIGNFTIPLSQKGEIKLPTLSDMFA</sequence>
<dbReference type="EMBL" id="U08108">
    <property type="protein sequence ID" value="AAA61564.1"/>
    <property type="molecule type" value="mRNA"/>
</dbReference>
<dbReference type="PIR" id="T06356">
    <property type="entry name" value="T06356"/>
</dbReference>
<dbReference type="RefSeq" id="NP_001238709.1">
    <property type="nucleotide sequence ID" value="NM_001251780.1"/>
</dbReference>
<dbReference type="SMR" id="P46519"/>
<dbReference type="FunCoup" id="P46519">
    <property type="interactions" value="408"/>
</dbReference>
<dbReference type="STRING" id="3847.P46519"/>
<dbReference type="PaxDb" id="3847-GLYMA18G47361.1"/>
<dbReference type="GeneID" id="547837"/>
<dbReference type="KEGG" id="gmx:547837"/>
<dbReference type="eggNOG" id="ENOG502RZ6Q">
    <property type="taxonomic scope" value="Eukaryota"/>
</dbReference>
<dbReference type="InParanoid" id="P46519"/>
<dbReference type="OrthoDB" id="588983at2759"/>
<dbReference type="Proteomes" id="UP000008827">
    <property type="component" value="Unplaced"/>
</dbReference>
<dbReference type="GO" id="GO:0009269">
    <property type="term" value="P:response to desiccation"/>
    <property type="evidence" value="ECO:0007669"/>
    <property type="project" value="InterPro"/>
</dbReference>
<dbReference type="FunFam" id="2.60.40.1820:FF:000001">
    <property type="entry name" value="Desiccation protectant protein Lea14-like"/>
    <property type="match status" value="1"/>
</dbReference>
<dbReference type="Gene3D" id="2.60.40.1820">
    <property type="match status" value="1"/>
</dbReference>
<dbReference type="InterPro" id="IPR045043">
    <property type="entry name" value="Lea14-like"/>
</dbReference>
<dbReference type="InterPro" id="IPR004864">
    <property type="entry name" value="LEA_2"/>
</dbReference>
<dbReference type="InterPro" id="IPR013990">
    <property type="entry name" value="WHy-dom"/>
</dbReference>
<dbReference type="PANTHER" id="PTHR31459">
    <property type="match status" value="1"/>
</dbReference>
<dbReference type="PANTHER" id="PTHR31459:SF19">
    <property type="entry name" value="DESICCATION-RELATED PROTEIN LEA14-RELATED"/>
    <property type="match status" value="1"/>
</dbReference>
<dbReference type="Pfam" id="PF03168">
    <property type="entry name" value="LEA_2"/>
    <property type="match status" value="1"/>
</dbReference>
<dbReference type="SMART" id="SM00769">
    <property type="entry name" value="WHy"/>
    <property type="match status" value="1"/>
</dbReference>
<dbReference type="SUPFAM" id="SSF117070">
    <property type="entry name" value="LEA14-like"/>
    <property type="match status" value="1"/>
</dbReference>
<name>LEA14_SOYBN</name>
<keyword id="KW-1185">Reference proteome</keyword>
<evidence type="ECO:0000305" key="1"/>
<accession>P46519</accession>
<reference key="1">
    <citation type="journal article" date="1994" name="Plant Physiol.">
        <title>Isolation and characterization of a drought-induced soybean cDNA encoding a D95 family late-embryogenesis-abundant protein.</title>
        <authorList>
            <person name="Maitra N."/>
            <person name="Cushman J.C."/>
        </authorList>
    </citation>
    <scope>NUCLEOTIDE SEQUENCE [MRNA]</scope>
    <source>
        <strain>cv. Essex</strain>
        <tissue>Leaf</tissue>
    </source>
</reference>
<protein>
    <recommendedName>
        <fullName>Desiccation protectant protein Lea14 homolog</fullName>
    </recommendedName>
</protein>
<organism>
    <name type="scientific">Glycine max</name>
    <name type="common">Soybean</name>
    <name type="synonym">Glycine hispida</name>
    <dbReference type="NCBI Taxonomy" id="3847"/>
    <lineage>
        <taxon>Eukaryota</taxon>
        <taxon>Viridiplantae</taxon>
        <taxon>Streptophyta</taxon>
        <taxon>Embryophyta</taxon>
        <taxon>Tracheophyta</taxon>
        <taxon>Spermatophyta</taxon>
        <taxon>Magnoliopsida</taxon>
        <taxon>eudicotyledons</taxon>
        <taxon>Gunneridae</taxon>
        <taxon>Pentapetalae</taxon>
        <taxon>rosids</taxon>
        <taxon>fabids</taxon>
        <taxon>Fabales</taxon>
        <taxon>Fabaceae</taxon>
        <taxon>Papilionoideae</taxon>
        <taxon>50 kb inversion clade</taxon>
        <taxon>NPAAA clade</taxon>
        <taxon>indigoferoid/millettioid clade</taxon>
        <taxon>Phaseoleae</taxon>
        <taxon>Glycine</taxon>
        <taxon>Glycine subgen. Soja</taxon>
    </lineage>
</organism>
<comment type="similarity">
    <text evidence="1">Belongs to the LEA type 2 family.</text>
</comment>
<proteinExistence type="evidence at transcript level"/>